<sequence length="476" mass="50937">MASPANQTGRITQVIGAVVDVQFEGHLPAILNAIETKNGDNRLVLEVAQHLGESTVRTIAMDTTEGLVRGQEVKDTGNPILVPVGVGTLGRIMNVIGEPVDEQGPVKAEDMRAIHQEAPLYTDQSTEAEILVTGIKVVDLLAPYAKGGKIGLFGGAGVGKTVLIQELINNVAKAHGGYSVFAGVGERTREGNDLYHEFIESGVNKKGGGEGSKCALVYGQMNEPPGARARVALSGLTVAEHFRDQGQDVLFFVDNIFRFTQAGSEVSALLGRIPSAVGYQPTLATDMGALQERITTTTKGSITSIQAIYVPADDLTDPAPATSFAHLDATTTLNRAISEKGIYPAVDPLDSTSRMLSPLIVGEEHYQTARMVQQVLQRYKSLQDIIAILGMDELSEEDKIAVARARKIERFLSQPFFVAEIFTGAPGKFVDLADTIKGFRAICDGKYDHLPEAAFYMVGTIEEAVEKGKKLAAEAA</sequence>
<protein>
    <recommendedName>
        <fullName evidence="1">ATP synthase subunit beta</fullName>
        <ecNumber evidence="1">7.1.2.2</ecNumber>
    </recommendedName>
    <alternativeName>
        <fullName evidence="1">ATP synthase F1 sector subunit beta</fullName>
    </alternativeName>
    <alternativeName>
        <fullName evidence="1">F-ATPase subunit beta</fullName>
    </alternativeName>
</protein>
<dbReference type="EC" id="7.1.2.2" evidence="1"/>
<dbReference type="EMBL" id="CP000319">
    <property type="protein sequence ID" value="ABE61419.1"/>
    <property type="molecule type" value="Genomic_DNA"/>
</dbReference>
<dbReference type="RefSeq" id="WP_011509123.1">
    <property type="nucleotide sequence ID" value="NC_007964.1"/>
</dbReference>
<dbReference type="SMR" id="Q1QQS8"/>
<dbReference type="STRING" id="323097.Nham_0529"/>
<dbReference type="KEGG" id="nha:Nham_0529"/>
<dbReference type="eggNOG" id="COG0055">
    <property type="taxonomic scope" value="Bacteria"/>
</dbReference>
<dbReference type="HOGENOM" id="CLU_022398_0_2_5"/>
<dbReference type="OrthoDB" id="9801639at2"/>
<dbReference type="Proteomes" id="UP000001953">
    <property type="component" value="Chromosome"/>
</dbReference>
<dbReference type="GO" id="GO:0005886">
    <property type="term" value="C:plasma membrane"/>
    <property type="evidence" value="ECO:0007669"/>
    <property type="project" value="UniProtKB-SubCell"/>
</dbReference>
<dbReference type="GO" id="GO:0045259">
    <property type="term" value="C:proton-transporting ATP synthase complex"/>
    <property type="evidence" value="ECO:0007669"/>
    <property type="project" value="UniProtKB-KW"/>
</dbReference>
<dbReference type="GO" id="GO:0005524">
    <property type="term" value="F:ATP binding"/>
    <property type="evidence" value="ECO:0007669"/>
    <property type="project" value="UniProtKB-UniRule"/>
</dbReference>
<dbReference type="GO" id="GO:0016887">
    <property type="term" value="F:ATP hydrolysis activity"/>
    <property type="evidence" value="ECO:0007669"/>
    <property type="project" value="InterPro"/>
</dbReference>
<dbReference type="GO" id="GO:0046933">
    <property type="term" value="F:proton-transporting ATP synthase activity, rotational mechanism"/>
    <property type="evidence" value="ECO:0007669"/>
    <property type="project" value="UniProtKB-UniRule"/>
</dbReference>
<dbReference type="CDD" id="cd18110">
    <property type="entry name" value="ATP-synt_F1_beta_C"/>
    <property type="match status" value="1"/>
</dbReference>
<dbReference type="CDD" id="cd18115">
    <property type="entry name" value="ATP-synt_F1_beta_N"/>
    <property type="match status" value="1"/>
</dbReference>
<dbReference type="CDD" id="cd01133">
    <property type="entry name" value="F1-ATPase_beta_CD"/>
    <property type="match status" value="1"/>
</dbReference>
<dbReference type="FunFam" id="1.10.1140.10:FF:000001">
    <property type="entry name" value="ATP synthase subunit beta"/>
    <property type="match status" value="1"/>
</dbReference>
<dbReference type="FunFam" id="2.40.10.170:FF:000004">
    <property type="entry name" value="ATP synthase subunit beta"/>
    <property type="match status" value="1"/>
</dbReference>
<dbReference type="FunFam" id="3.40.50.300:FF:000026">
    <property type="entry name" value="ATP synthase subunit beta"/>
    <property type="match status" value="1"/>
</dbReference>
<dbReference type="Gene3D" id="2.40.10.170">
    <property type="match status" value="1"/>
</dbReference>
<dbReference type="Gene3D" id="1.10.1140.10">
    <property type="entry name" value="Bovine Mitochondrial F1-atpase, Atp Synthase Beta Chain, Chain D, domain 3"/>
    <property type="match status" value="1"/>
</dbReference>
<dbReference type="Gene3D" id="3.40.50.300">
    <property type="entry name" value="P-loop containing nucleotide triphosphate hydrolases"/>
    <property type="match status" value="1"/>
</dbReference>
<dbReference type="HAMAP" id="MF_01347">
    <property type="entry name" value="ATP_synth_beta_bact"/>
    <property type="match status" value="1"/>
</dbReference>
<dbReference type="InterPro" id="IPR003593">
    <property type="entry name" value="AAA+_ATPase"/>
</dbReference>
<dbReference type="InterPro" id="IPR055190">
    <property type="entry name" value="ATP-synt_VA_C"/>
</dbReference>
<dbReference type="InterPro" id="IPR005722">
    <property type="entry name" value="ATP_synth_F1_bsu"/>
</dbReference>
<dbReference type="InterPro" id="IPR020003">
    <property type="entry name" value="ATPase_a/bsu_AS"/>
</dbReference>
<dbReference type="InterPro" id="IPR050053">
    <property type="entry name" value="ATPase_alpha/beta_chains"/>
</dbReference>
<dbReference type="InterPro" id="IPR004100">
    <property type="entry name" value="ATPase_F1/V1/A1_a/bsu_N"/>
</dbReference>
<dbReference type="InterPro" id="IPR036121">
    <property type="entry name" value="ATPase_F1/V1/A1_a/bsu_N_sf"/>
</dbReference>
<dbReference type="InterPro" id="IPR000194">
    <property type="entry name" value="ATPase_F1/V1/A1_a/bsu_nucl-bd"/>
</dbReference>
<dbReference type="InterPro" id="IPR024034">
    <property type="entry name" value="ATPase_F1/V1_b/a_C"/>
</dbReference>
<dbReference type="InterPro" id="IPR027417">
    <property type="entry name" value="P-loop_NTPase"/>
</dbReference>
<dbReference type="NCBIfam" id="TIGR01039">
    <property type="entry name" value="atpD"/>
    <property type="match status" value="1"/>
</dbReference>
<dbReference type="PANTHER" id="PTHR15184">
    <property type="entry name" value="ATP SYNTHASE"/>
    <property type="match status" value="1"/>
</dbReference>
<dbReference type="PANTHER" id="PTHR15184:SF71">
    <property type="entry name" value="ATP SYNTHASE SUBUNIT BETA, MITOCHONDRIAL"/>
    <property type="match status" value="1"/>
</dbReference>
<dbReference type="Pfam" id="PF00006">
    <property type="entry name" value="ATP-synt_ab"/>
    <property type="match status" value="1"/>
</dbReference>
<dbReference type="Pfam" id="PF02874">
    <property type="entry name" value="ATP-synt_ab_N"/>
    <property type="match status" value="1"/>
</dbReference>
<dbReference type="Pfam" id="PF22919">
    <property type="entry name" value="ATP-synt_VA_C"/>
    <property type="match status" value="1"/>
</dbReference>
<dbReference type="PIRSF" id="PIRSF039072">
    <property type="entry name" value="ATPase_subunit_beta"/>
    <property type="match status" value="1"/>
</dbReference>
<dbReference type="SMART" id="SM00382">
    <property type="entry name" value="AAA"/>
    <property type="match status" value="1"/>
</dbReference>
<dbReference type="SUPFAM" id="SSF47917">
    <property type="entry name" value="C-terminal domain of alpha and beta subunits of F1 ATP synthase"/>
    <property type="match status" value="1"/>
</dbReference>
<dbReference type="SUPFAM" id="SSF50615">
    <property type="entry name" value="N-terminal domain of alpha and beta subunits of F1 ATP synthase"/>
    <property type="match status" value="1"/>
</dbReference>
<dbReference type="SUPFAM" id="SSF52540">
    <property type="entry name" value="P-loop containing nucleoside triphosphate hydrolases"/>
    <property type="match status" value="1"/>
</dbReference>
<dbReference type="PROSITE" id="PS00152">
    <property type="entry name" value="ATPASE_ALPHA_BETA"/>
    <property type="match status" value="1"/>
</dbReference>
<evidence type="ECO:0000255" key="1">
    <source>
        <dbReference type="HAMAP-Rule" id="MF_01347"/>
    </source>
</evidence>
<gene>
    <name evidence="1" type="primary">atpD</name>
    <name type="ordered locus">Nham_0529</name>
</gene>
<name>ATPB_NITHX</name>
<proteinExistence type="inferred from homology"/>
<accession>Q1QQS8</accession>
<feature type="chain" id="PRO_0000254315" description="ATP synthase subunit beta">
    <location>
        <begin position="1"/>
        <end position="476"/>
    </location>
</feature>
<feature type="binding site" evidence="1">
    <location>
        <begin position="154"/>
        <end position="161"/>
    </location>
    <ligand>
        <name>ATP</name>
        <dbReference type="ChEBI" id="CHEBI:30616"/>
    </ligand>
</feature>
<organism>
    <name type="scientific">Nitrobacter hamburgensis (strain DSM 10229 / NCIMB 13809 / X14)</name>
    <dbReference type="NCBI Taxonomy" id="323097"/>
    <lineage>
        <taxon>Bacteria</taxon>
        <taxon>Pseudomonadati</taxon>
        <taxon>Pseudomonadota</taxon>
        <taxon>Alphaproteobacteria</taxon>
        <taxon>Hyphomicrobiales</taxon>
        <taxon>Nitrobacteraceae</taxon>
        <taxon>Nitrobacter</taxon>
    </lineage>
</organism>
<reference key="1">
    <citation type="submission" date="2006-03" db="EMBL/GenBank/DDBJ databases">
        <title>Complete sequence of chromosome of Nitrobacter hamburgensis X14.</title>
        <authorList>
            <consortium name="US DOE Joint Genome Institute"/>
            <person name="Copeland A."/>
            <person name="Lucas S."/>
            <person name="Lapidus A."/>
            <person name="Barry K."/>
            <person name="Detter J.C."/>
            <person name="Glavina del Rio T."/>
            <person name="Hammon N."/>
            <person name="Israni S."/>
            <person name="Dalin E."/>
            <person name="Tice H."/>
            <person name="Pitluck S."/>
            <person name="Chain P."/>
            <person name="Malfatti S."/>
            <person name="Shin M."/>
            <person name="Vergez L."/>
            <person name="Schmutz J."/>
            <person name="Larimer F."/>
            <person name="Land M."/>
            <person name="Hauser L."/>
            <person name="Kyrpides N."/>
            <person name="Ivanova N."/>
            <person name="Ward B."/>
            <person name="Arp D."/>
            <person name="Klotz M."/>
            <person name="Stein L."/>
            <person name="O'Mullan G."/>
            <person name="Starkenburg S."/>
            <person name="Sayavedra L."/>
            <person name="Poret-Peterson A.T."/>
            <person name="Gentry M.E."/>
            <person name="Bruce D."/>
            <person name="Richardson P."/>
        </authorList>
    </citation>
    <scope>NUCLEOTIDE SEQUENCE [LARGE SCALE GENOMIC DNA]</scope>
    <source>
        <strain>DSM 10229 / NCIMB 13809 / X14</strain>
    </source>
</reference>
<comment type="function">
    <text evidence="1">Produces ATP from ADP in the presence of a proton gradient across the membrane. The catalytic sites are hosted primarily by the beta subunits.</text>
</comment>
<comment type="catalytic activity">
    <reaction evidence="1">
        <text>ATP + H2O + 4 H(+)(in) = ADP + phosphate + 5 H(+)(out)</text>
        <dbReference type="Rhea" id="RHEA:57720"/>
        <dbReference type="ChEBI" id="CHEBI:15377"/>
        <dbReference type="ChEBI" id="CHEBI:15378"/>
        <dbReference type="ChEBI" id="CHEBI:30616"/>
        <dbReference type="ChEBI" id="CHEBI:43474"/>
        <dbReference type="ChEBI" id="CHEBI:456216"/>
        <dbReference type="EC" id="7.1.2.2"/>
    </reaction>
</comment>
<comment type="subunit">
    <text evidence="1">F-type ATPases have 2 components, CF(1) - the catalytic core - and CF(0) - the membrane proton channel. CF(1) has five subunits: alpha(3), beta(3), gamma(1), delta(1), epsilon(1). CF(0) has three main subunits: a(1), b(2) and c(9-12). The alpha and beta chains form an alternating ring which encloses part of the gamma chain. CF(1) is attached to CF(0) by a central stalk formed by the gamma and epsilon chains, while a peripheral stalk is formed by the delta and b chains.</text>
</comment>
<comment type="subcellular location">
    <subcellularLocation>
        <location evidence="1">Cell inner membrane</location>
        <topology evidence="1">Peripheral membrane protein</topology>
    </subcellularLocation>
</comment>
<comment type="similarity">
    <text evidence="1">Belongs to the ATPase alpha/beta chains family.</text>
</comment>
<keyword id="KW-0066">ATP synthesis</keyword>
<keyword id="KW-0067">ATP-binding</keyword>
<keyword id="KW-0997">Cell inner membrane</keyword>
<keyword id="KW-1003">Cell membrane</keyword>
<keyword id="KW-0139">CF(1)</keyword>
<keyword id="KW-0375">Hydrogen ion transport</keyword>
<keyword id="KW-0406">Ion transport</keyword>
<keyword id="KW-0472">Membrane</keyword>
<keyword id="KW-0547">Nucleotide-binding</keyword>
<keyword id="KW-1185">Reference proteome</keyword>
<keyword id="KW-1278">Translocase</keyword>
<keyword id="KW-0813">Transport</keyword>